<name>DNAJ_RHILE</name>
<gene>
    <name type="primary">dnaJ</name>
</gene>
<sequence length="234" mass="25268">MAKADFYETLGVAKSADEKELKSAFRKLAMKFHPDKNPDDKDAERKFKEINEAYEMLKDPQKRAAYDRYGHAAFEHGGMGGGGGGFAGGGFSDIFEDIFGEMMGGGAARQRSSGGRERGADLRYNMEITLEESFSGKTAQIRVPTSITCDVCTGSGAKPGTQPKNCGTCQGTGRVRAAQGFFSIERTCPTCHGRGQIIPDPCPKCHGQGRVTEERSLSVNIPAGIEDGTRIRLQ</sequence>
<feature type="chain" id="PRO_0000070863" description="Chaperone protein DnaJ">
    <location>
        <begin position="1"/>
        <end position="234" status="greater than"/>
    </location>
</feature>
<feature type="domain" description="J" evidence="2">
    <location>
        <begin position="5"/>
        <end position="70"/>
    </location>
</feature>
<feature type="repeat" description="CXXCXGXG motif">
    <location>
        <begin position="149"/>
        <end position="156"/>
    </location>
</feature>
<feature type="repeat" description="CXXCXGXG motif">
    <location>
        <begin position="166"/>
        <end position="173"/>
    </location>
</feature>
<feature type="repeat" description="CXXCXGXG motif">
    <location>
        <begin position="188"/>
        <end position="195"/>
    </location>
</feature>
<feature type="repeat" description="CXXCXGXG motif">
    <location>
        <begin position="202"/>
        <end position="209"/>
    </location>
</feature>
<feature type="zinc finger region" description="CR-type" evidence="3">
    <location>
        <begin position="136"/>
        <end position="214"/>
    </location>
</feature>
<feature type="binding site" evidence="1">
    <location>
        <position position="149"/>
    </location>
    <ligand>
        <name>Zn(2+)</name>
        <dbReference type="ChEBI" id="CHEBI:29105"/>
        <label>1</label>
    </ligand>
</feature>
<feature type="binding site" evidence="1">
    <location>
        <position position="152"/>
    </location>
    <ligand>
        <name>Zn(2+)</name>
        <dbReference type="ChEBI" id="CHEBI:29105"/>
        <label>1</label>
    </ligand>
</feature>
<feature type="binding site" evidence="1">
    <location>
        <position position="166"/>
    </location>
    <ligand>
        <name>Zn(2+)</name>
        <dbReference type="ChEBI" id="CHEBI:29105"/>
        <label>2</label>
    </ligand>
</feature>
<feature type="binding site" evidence="1">
    <location>
        <position position="169"/>
    </location>
    <ligand>
        <name>Zn(2+)</name>
        <dbReference type="ChEBI" id="CHEBI:29105"/>
        <label>2</label>
    </ligand>
</feature>
<feature type="binding site" evidence="1">
    <location>
        <position position="188"/>
    </location>
    <ligand>
        <name>Zn(2+)</name>
        <dbReference type="ChEBI" id="CHEBI:29105"/>
        <label>2</label>
    </ligand>
</feature>
<feature type="binding site" evidence="1">
    <location>
        <position position="191"/>
    </location>
    <ligand>
        <name>Zn(2+)</name>
        <dbReference type="ChEBI" id="CHEBI:29105"/>
        <label>2</label>
    </ligand>
</feature>
<feature type="binding site" evidence="1">
    <location>
        <position position="202"/>
    </location>
    <ligand>
        <name>Zn(2+)</name>
        <dbReference type="ChEBI" id="CHEBI:29105"/>
        <label>1</label>
    </ligand>
</feature>
<feature type="binding site" evidence="1">
    <location>
        <position position="205"/>
    </location>
    <ligand>
        <name>Zn(2+)</name>
        <dbReference type="ChEBI" id="CHEBI:29105"/>
        <label>1</label>
    </ligand>
</feature>
<feature type="non-terminal residue">
    <location>
        <position position="234"/>
    </location>
</feature>
<protein>
    <recommendedName>
        <fullName>Chaperone protein DnaJ</fullName>
    </recommendedName>
</protein>
<reference key="1">
    <citation type="submission" date="1997-08" db="EMBL/GenBank/DDBJ databases">
        <authorList>
            <person name="Simpkins S.A."/>
            <person name="Johnston A.W.B."/>
            <person name="James R."/>
        </authorList>
    </citation>
    <scope>NUCLEOTIDE SEQUENCE [GENOMIC DNA]</scope>
    <source>
        <strain>8401:PRL1</strain>
    </source>
</reference>
<keyword id="KW-0143">Chaperone</keyword>
<keyword id="KW-0963">Cytoplasm</keyword>
<keyword id="KW-0235">DNA replication</keyword>
<keyword id="KW-0479">Metal-binding</keyword>
<keyword id="KW-0677">Repeat</keyword>
<keyword id="KW-0346">Stress response</keyword>
<keyword id="KW-0862">Zinc</keyword>
<keyword id="KW-0863">Zinc-finger</keyword>
<comment type="function">
    <text evidence="1">Participates actively in the response to hyperosmotic and heat shock by preventing the aggregation of stress-denatured proteins and by disaggregating proteins, also in an autonomous, DnaK-independent fashion. Unfolded proteins bind initially to DnaJ; upon interaction with the DnaJ-bound protein, DnaK hydrolyzes its bound ATP, resulting in the formation of a stable complex. GrpE releases ADP from DnaK; ATP binding to DnaK triggers the release of the substrate protein, thus completing the reaction cycle. Several rounds of ATP-dependent interactions between DnaJ, DnaK and GrpE are required for fully efficient folding. Also involved, together with DnaK and GrpE, in the DNA replication of plasmids through activation of initiation proteins (By similarity).</text>
</comment>
<comment type="cofactor">
    <cofactor evidence="1">
        <name>Zn(2+)</name>
        <dbReference type="ChEBI" id="CHEBI:29105"/>
    </cofactor>
    <text evidence="1">Binds 2 Zn(2+) ions per monomer.</text>
</comment>
<comment type="subunit">
    <text evidence="1">Homodimer.</text>
</comment>
<comment type="subcellular location">
    <subcellularLocation>
        <location evidence="1">Cytoplasm</location>
    </subcellularLocation>
</comment>
<comment type="domain">
    <text evidence="1">The J domain is necessary and sufficient to stimulate DnaK ATPase activity. Zinc center 1 plays an important role in the autonomous, DnaK-independent chaperone activity of DnaJ. Zinc center 2 is essential for interaction with DnaK and for DnaJ activity (By similarity).</text>
</comment>
<comment type="similarity">
    <text evidence="4">Belongs to the DnaJ family.</text>
</comment>
<dbReference type="EMBL" id="Y14649">
    <property type="protein sequence ID" value="CAA74983.1"/>
    <property type="molecule type" value="Genomic_DNA"/>
</dbReference>
<dbReference type="SMR" id="O33529"/>
<dbReference type="eggNOG" id="COG0484">
    <property type="taxonomic scope" value="Bacteria"/>
</dbReference>
<dbReference type="GO" id="GO:0005737">
    <property type="term" value="C:cytoplasm"/>
    <property type="evidence" value="ECO:0007669"/>
    <property type="project" value="UniProtKB-SubCell"/>
</dbReference>
<dbReference type="GO" id="GO:0031072">
    <property type="term" value="F:heat shock protein binding"/>
    <property type="evidence" value="ECO:0007669"/>
    <property type="project" value="InterPro"/>
</dbReference>
<dbReference type="GO" id="GO:0051082">
    <property type="term" value="F:unfolded protein binding"/>
    <property type="evidence" value="ECO:0007669"/>
    <property type="project" value="InterPro"/>
</dbReference>
<dbReference type="GO" id="GO:0008270">
    <property type="term" value="F:zinc ion binding"/>
    <property type="evidence" value="ECO:0007669"/>
    <property type="project" value="UniProtKB-KW"/>
</dbReference>
<dbReference type="GO" id="GO:0051085">
    <property type="term" value="P:chaperone cofactor-dependent protein refolding"/>
    <property type="evidence" value="ECO:0007669"/>
    <property type="project" value="TreeGrafter"/>
</dbReference>
<dbReference type="GO" id="GO:0006260">
    <property type="term" value="P:DNA replication"/>
    <property type="evidence" value="ECO:0007669"/>
    <property type="project" value="UniProtKB-KW"/>
</dbReference>
<dbReference type="GO" id="GO:0042026">
    <property type="term" value="P:protein refolding"/>
    <property type="evidence" value="ECO:0007669"/>
    <property type="project" value="TreeGrafter"/>
</dbReference>
<dbReference type="CDD" id="cd06257">
    <property type="entry name" value="DnaJ"/>
    <property type="match status" value="1"/>
</dbReference>
<dbReference type="CDD" id="cd10719">
    <property type="entry name" value="DnaJ_zf"/>
    <property type="match status" value="1"/>
</dbReference>
<dbReference type="FunFam" id="1.10.287.110:FF:000034">
    <property type="entry name" value="Chaperone protein DnaJ"/>
    <property type="match status" value="1"/>
</dbReference>
<dbReference type="FunFam" id="2.10.230.10:FF:000002">
    <property type="entry name" value="Molecular chaperone DnaJ"/>
    <property type="match status" value="1"/>
</dbReference>
<dbReference type="Gene3D" id="1.10.287.110">
    <property type="entry name" value="DnaJ domain"/>
    <property type="match status" value="1"/>
</dbReference>
<dbReference type="Gene3D" id="2.10.230.10">
    <property type="entry name" value="Heat shock protein DnaJ, cysteine-rich domain"/>
    <property type="match status" value="1"/>
</dbReference>
<dbReference type="Gene3D" id="2.60.260.20">
    <property type="entry name" value="Urease metallochaperone UreE, N-terminal domain"/>
    <property type="match status" value="1"/>
</dbReference>
<dbReference type="InterPro" id="IPR002939">
    <property type="entry name" value="DnaJ_C"/>
</dbReference>
<dbReference type="InterPro" id="IPR001623">
    <property type="entry name" value="DnaJ_domain"/>
</dbReference>
<dbReference type="InterPro" id="IPR018253">
    <property type="entry name" value="DnaJ_domain_CS"/>
</dbReference>
<dbReference type="InterPro" id="IPR008971">
    <property type="entry name" value="HSP40/DnaJ_pept-bd"/>
</dbReference>
<dbReference type="InterPro" id="IPR001305">
    <property type="entry name" value="HSP_DnaJ_Cys-rich_dom"/>
</dbReference>
<dbReference type="InterPro" id="IPR036410">
    <property type="entry name" value="HSP_DnaJ_Cys-rich_dom_sf"/>
</dbReference>
<dbReference type="InterPro" id="IPR036869">
    <property type="entry name" value="J_dom_sf"/>
</dbReference>
<dbReference type="NCBIfam" id="NF008035">
    <property type="entry name" value="PRK10767.1"/>
    <property type="match status" value="1"/>
</dbReference>
<dbReference type="PANTHER" id="PTHR43096:SF48">
    <property type="entry name" value="CHAPERONE PROTEIN DNAJ"/>
    <property type="match status" value="1"/>
</dbReference>
<dbReference type="PANTHER" id="PTHR43096">
    <property type="entry name" value="DNAJ HOMOLOG 1, MITOCHONDRIAL-RELATED"/>
    <property type="match status" value="1"/>
</dbReference>
<dbReference type="Pfam" id="PF00226">
    <property type="entry name" value="DnaJ"/>
    <property type="match status" value="1"/>
</dbReference>
<dbReference type="Pfam" id="PF01556">
    <property type="entry name" value="DnaJ_C"/>
    <property type="match status" value="1"/>
</dbReference>
<dbReference type="Pfam" id="PF00684">
    <property type="entry name" value="DnaJ_CXXCXGXG"/>
    <property type="match status" value="1"/>
</dbReference>
<dbReference type="PRINTS" id="PR00625">
    <property type="entry name" value="JDOMAIN"/>
</dbReference>
<dbReference type="SMART" id="SM00271">
    <property type="entry name" value="DnaJ"/>
    <property type="match status" value="1"/>
</dbReference>
<dbReference type="SUPFAM" id="SSF46565">
    <property type="entry name" value="Chaperone J-domain"/>
    <property type="match status" value="1"/>
</dbReference>
<dbReference type="SUPFAM" id="SSF57938">
    <property type="entry name" value="DnaJ/Hsp40 cysteine-rich domain"/>
    <property type="match status" value="1"/>
</dbReference>
<dbReference type="SUPFAM" id="SSF49493">
    <property type="entry name" value="HSP40/DnaJ peptide-binding domain"/>
    <property type="match status" value="1"/>
</dbReference>
<dbReference type="PROSITE" id="PS00636">
    <property type="entry name" value="DNAJ_1"/>
    <property type="match status" value="1"/>
</dbReference>
<dbReference type="PROSITE" id="PS50076">
    <property type="entry name" value="DNAJ_2"/>
    <property type="match status" value="1"/>
</dbReference>
<dbReference type="PROSITE" id="PS51188">
    <property type="entry name" value="ZF_CR"/>
    <property type="match status" value="1"/>
</dbReference>
<proteinExistence type="inferred from homology"/>
<accession>O33529</accession>
<evidence type="ECO:0000250" key="1"/>
<evidence type="ECO:0000255" key="2">
    <source>
        <dbReference type="PROSITE-ProRule" id="PRU00286"/>
    </source>
</evidence>
<evidence type="ECO:0000255" key="3">
    <source>
        <dbReference type="PROSITE-ProRule" id="PRU00546"/>
    </source>
</evidence>
<evidence type="ECO:0000305" key="4"/>
<organism>
    <name type="scientific">Rhizobium leguminosarum</name>
    <dbReference type="NCBI Taxonomy" id="384"/>
    <lineage>
        <taxon>Bacteria</taxon>
        <taxon>Pseudomonadati</taxon>
        <taxon>Pseudomonadota</taxon>
        <taxon>Alphaproteobacteria</taxon>
        <taxon>Hyphomicrobiales</taxon>
        <taxon>Rhizobiaceae</taxon>
        <taxon>Rhizobium/Agrobacterium group</taxon>
        <taxon>Rhizobium</taxon>
    </lineage>
</organism>